<organism>
    <name type="scientific">Caenorhabditis elegans</name>
    <dbReference type="NCBI Taxonomy" id="6239"/>
    <lineage>
        <taxon>Eukaryota</taxon>
        <taxon>Metazoa</taxon>
        <taxon>Ecdysozoa</taxon>
        <taxon>Nematoda</taxon>
        <taxon>Chromadorea</taxon>
        <taxon>Rhabditida</taxon>
        <taxon>Rhabditina</taxon>
        <taxon>Rhabditomorpha</taxon>
        <taxon>Rhabditoidea</taxon>
        <taxon>Rhabditidae</taxon>
        <taxon>Peloderinae</taxon>
        <taxon>Caenorhabditis</taxon>
    </lineage>
</organism>
<proteinExistence type="evidence at protein level"/>
<keyword id="KW-0217">Developmental protein</keyword>
<keyword id="KW-1015">Disulfide bond</keyword>
<keyword id="KW-0325">Glycoprotein</keyword>
<keyword id="KW-0445">Lipid transport</keyword>
<keyword id="KW-0472">Membrane</keyword>
<keyword id="KW-1185">Reference proteome</keyword>
<keyword id="KW-0732">Signal</keyword>
<keyword id="KW-0812">Transmembrane</keyword>
<keyword id="KW-1133">Transmembrane helix</keyword>
<keyword id="KW-0813">Transport</keyword>
<protein>
    <recommendedName>
        <fullName evidence="6">NPC intracellular cholesterol transporter 1 homolog 1</fullName>
    </recommendedName>
    <alternativeName>
        <fullName evidence="6">Niemann-Pick C1 protein homolog 1</fullName>
    </alternativeName>
</protein>
<gene>
    <name evidence="7" type="primary">ncr-1</name>
    <name type="synonym">npc-1</name>
    <name type="ORF">F02E8.6</name>
</gene>
<reference key="1">
    <citation type="journal article" date="1998" name="Science">
        <title>Genome sequence of the nematode C. elegans: a platform for investigating biology.</title>
        <authorList>
            <consortium name="The C. elegans sequencing consortium"/>
        </authorList>
    </citation>
    <scope>NUCLEOTIDE SEQUENCE [LARGE SCALE GENOMIC DNA]</scope>
    <source>
        <strain>Bristol N2</strain>
    </source>
</reference>
<reference evidence="6" key="2">
    <citation type="journal article" date="2000" name="Curr. Biol.">
        <title>A model for Niemann-Pick type C disease in the nematode Caenorhabditis elegans.</title>
        <authorList>
            <person name="Sym M."/>
            <person name="Basson M."/>
            <person name="Johnson C."/>
        </authorList>
    </citation>
    <scope>PARTIAL NUCLEOTIDE SEQUENCE [GENOMIC DNA]</scope>
    <scope>FUNCTION</scope>
    <scope>DISRUPTION PHENOTYPE</scope>
</reference>
<reference evidence="6" key="3">
    <citation type="journal article" date="1997" name="Science">
        <title>Murine model of Niemann-Pick C disease: mutation in a cholesterol homeostasis gene.</title>
        <authorList>
            <person name="Loftus S.K."/>
            <person name="Morris J.A."/>
            <person name="Carstea E.D."/>
            <person name="Gu J.Z."/>
            <person name="Cummings C."/>
            <person name="Brown A."/>
            <person name="Ellison J."/>
            <person name="Ohno K."/>
            <person name="Rosenfeld M.A."/>
            <person name="Tagle D.A."/>
            <person name="Pentchev P.G."/>
            <person name="Pavan W.J."/>
        </authorList>
    </citation>
    <scope>IDENTIFICATION</scope>
</reference>
<reference key="4">
    <citation type="journal article" date="2007" name="Mol. Cell. Proteomics">
        <title>Proteomics reveals N-linked glycoprotein diversity in Caenorhabditis elegans and suggests an atypical translocation mechanism for integral membrane proteins.</title>
        <authorList>
            <person name="Kaji H."/>
            <person name="Kamiie J."/>
            <person name="Kawakami H."/>
            <person name="Kido K."/>
            <person name="Yamauchi Y."/>
            <person name="Shinkawa T."/>
            <person name="Taoka M."/>
            <person name="Takahashi N."/>
            <person name="Isobe T."/>
        </authorList>
    </citation>
    <scope>GLYCOSYLATION [LARGE SCALE ANALYSIS] AT ASN-231</scope>
    <scope>IDENTIFICATION BY MASS SPECTROMETRY</scope>
    <source>
        <strain>Bristol N2</strain>
    </source>
</reference>
<dbReference type="EMBL" id="FO081068">
    <property type="protein sequence ID" value="CCD83387.1"/>
    <property type="molecule type" value="Genomic_DNA"/>
</dbReference>
<dbReference type="PIR" id="T15961">
    <property type="entry name" value="T15961"/>
</dbReference>
<dbReference type="RefSeq" id="NP_508771.1">
    <property type="nucleotide sequence ID" value="NM_076370.5"/>
</dbReference>
<dbReference type="SMR" id="Q19127"/>
<dbReference type="BioGRID" id="45654">
    <property type="interactions" value="3"/>
</dbReference>
<dbReference type="FunCoup" id="Q19127">
    <property type="interactions" value="1842"/>
</dbReference>
<dbReference type="STRING" id="6239.F02E8.6.1"/>
<dbReference type="TCDB" id="2.A.6.6.8">
    <property type="family name" value="the resistance-nodulation-cell division (rnd) superfamily"/>
</dbReference>
<dbReference type="GlyCosmos" id="Q19127">
    <property type="glycosylation" value="6 sites, No reported glycans"/>
</dbReference>
<dbReference type="iPTMnet" id="Q19127"/>
<dbReference type="PaxDb" id="6239-F02E8.6"/>
<dbReference type="EnsemblMetazoa" id="F02E8.6.1">
    <property type="protein sequence ID" value="F02E8.6.1"/>
    <property type="gene ID" value="WBGene00003561"/>
</dbReference>
<dbReference type="EnsemblMetazoa" id="F02E8.6.2">
    <property type="protein sequence ID" value="F02E8.6.2"/>
    <property type="gene ID" value="WBGene00003561"/>
</dbReference>
<dbReference type="GeneID" id="180719"/>
<dbReference type="KEGG" id="cel:CELE_F02E8.6"/>
<dbReference type="UCSC" id="F02E8.6">
    <property type="organism name" value="c. elegans"/>
</dbReference>
<dbReference type="AGR" id="WB:WBGene00003561"/>
<dbReference type="CTD" id="180719"/>
<dbReference type="WormBase" id="F02E8.6">
    <property type="protein sequence ID" value="CE29251"/>
    <property type="gene ID" value="WBGene00003561"/>
    <property type="gene designation" value="ncr-1"/>
</dbReference>
<dbReference type="eggNOG" id="KOG1933">
    <property type="taxonomic scope" value="Eukaryota"/>
</dbReference>
<dbReference type="HOGENOM" id="CLU_002359_0_0_1"/>
<dbReference type="InParanoid" id="Q19127"/>
<dbReference type="OMA" id="CYTDASM"/>
<dbReference type="OrthoDB" id="6510177at2759"/>
<dbReference type="PhylomeDB" id="Q19127"/>
<dbReference type="Reactome" id="R-CEL-8963678">
    <property type="pathway name" value="Intestinal lipid absorption"/>
</dbReference>
<dbReference type="PRO" id="PR:Q19127"/>
<dbReference type="Proteomes" id="UP000001940">
    <property type="component" value="Chromosome X"/>
</dbReference>
<dbReference type="Bgee" id="WBGene00003561">
    <property type="expression patterns" value="Expressed in larva and 3 other cell types or tissues"/>
</dbReference>
<dbReference type="GO" id="GO:0005770">
    <property type="term" value="C:late endosome"/>
    <property type="evidence" value="ECO:0000250"/>
    <property type="project" value="WormBase"/>
</dbReference>
<dbReference type="GO" id="GO:0005764">
    <property type="term" value="C:lysosome"/>
    <property type="evidence" value="ECO:0000250"/>
    <property type="project" value="WormBase"/>
</dbReference>
<dbReference type="GO" id="GO:0005886">
    <property type="term" value="C:plasma membrane"/>
    <property type="evidence" value="ECO:0000318"/>
    <property type="project" value="GO_Central"/>
</dbReference>
<dbReference type="GO" id="GO:0015485">
    <property type="term" value="F:cholesterol binding"/>
    <property type="evidence" value="ECO:0000318"/>
    <property type="project" value="GO_Central"/>
</dbReference>
<dbReference type="GO" id="GO:0042632">
    <property type="term" value="P:cholesterol homeostasis"/>
    <property type="evidence" value="ECO:0000315"/>
    <property type="project" value="WormBase"/>
</dbReference>
<dbReference type="GO" id="GO:0030301">
    <property type="term" value="P:cholesterol transport"/>
    <property type="evidence" value="ECO:0000315"/>
    <property type="project" value="WormBase"/>
</dbReference>
<dbReference type="GO" id="GO:0040024">
    <property type="term" value="P:dauer larval development"/>
    <property type="evidence" value="ECO:0000316"/>
    <property type="project" value="WormBase"/>
</dbReference>
<dbReference type="GO" id="GO:0030299">
    <property type="term" value="P:intestinal cholesterol absorption"/>
    <property type="evidence" value="ECO:0000318"/>
    <property type="project" value="GO_Central"/>
</dbReference>
<dbReference type="GO" id="GO:0040010">
    <property type="term" value="P:positive regulation of growth rate"/>
    <property type="evidence" value="ECO:0000315"/>
    <property type="project" value="WormBase"/>
</dbReference>
<dbReference type="GO" id="GO:0046662">
    <property type="term" value="P:regulation of egg-laying behavior"/>
    <property type="evidence" value="ECO:0000315"/>
    <property type="project" value="WormBase"/>
</dbReference>
<dbReference type="GO" id="GO:0015918">
    <property type="term" value="P:sterol transport"/>
    <property type="evidence" value="ECO:0000318"/>
    <property type="project" value="GO_Central"/>
</dbReference>
<dbReference type="FunFam" id="1.20.1640.10:FF:000054">
    <property type="entry name" value="Protein CBR-NCR-1"/>
    <property type="match status" value="1"/>
</dbReference>
<dbReference type="Gene3D" id="1.20.1640.10">
    <property type="entry name" value="Multidrug efflux transporter AcrB transmembrane domain"/>
    <property type="match status" value="2"/>
</dbReference>
<dbReference type="InterPro" id="IPR053958">
    <property type="entry name" value="HMGCR/SNAP/NPC1-like_SSD"/>
</dbReference>
<dbReference type="InterPro" id="IPR053956">
    <property type="entry name" value="NPC1_MLD"/>
</dbReference>
<dbReference type="InterPro" id="IPR032190">
    <property type="entry name" value="NPC1_N"/>
</dbReference>
<dbReference type="InterPro" id="IPR000731">
    <property type="entry name" value="SSD"/>
</dbReference>
<dbReference type="PANTHER" id="PTHR45727">
    <property type="entry name" value="NPC INTRACELLULAR CHOLESTEROL TRANSPORTER 1"/>
    <property type="match status" value="1"/>
</dbReference>
<dbReference type="PANTHER" id="PTHR45727:SF1">
    <property type="entry name" value="NPC INTRACELLULAR CHOLESTEROL TRANSPORTER 1 HOMOLOG 1"/>
    <property type="match status" value="1"/>
</dbReference>
<dbReference type="Pfam" id="PF22314">
    <property type="entry name" value="NPC1_MLD"/>
    <property type="match status" value="1"/>
</dbReference>
<dbReference type="Pfam" id="PF16414">
    <property type="entry name" value="NPC1_N"/>
    <property type="match status" value="1"/>
</dbReference>
<dbReference type="Pfam" id="PF12349">
    <property type="entry name" value="Sterol-sensing"/>
    <property type="match status" value="1"/>
</dbReference>
<dbReference type="SUPFAM" id="SSF82866">
    <property type="entry name" value="Multidrug efflux transporter AcrB transmembrane domain"/>
    <property type="match status" value="2"/>
</dbReference>
<dbReference type="PROSITE" id="PS50156">
    <property type="entry name" value="SSD"/>
    <property type="match status" value="1"/>
</dbReference>
<evidence type="ECO:0000250" key="1">
    <source>
        <dbReference type="UniProtKB" id="O15118"/>
    </source>
</evidence>
<evidence type="ECO:0000255" key="2"/>
<evidence type="ECO:0000255" key="3">
    <source>
        <dbReference type="PROSITE-ProRule" id="PRU00199"/>
    </source>
</evidence>
<evidence type="ECO:0000269" key="4">
    <source>
    </source>
</evidence>
<evidence type="ECO:0000269" key="5">
    <source>
    </source>
</evidence>
<evidence type="ECO:0000305" key="6"/>
<evidence type="ECO:0000312" key="7">
    <source>
        <dbReference type="WormBase" id="F02E8.6"/>
    </source>
</evidence>
<accession>Q19127</accession>
<name>NPC1A_CAEEL</name>
<sequence length="1383" mass="155457">MKQLLIFCLLFGSIFHHGDAGCIMRGLCQKHTENAYGPCVTNDTNVEPTAFDKTHPAYEKMVEFCPHLLTGDNKLCCTPSQAEGLTKQIAQARHILGRCPSCFDNFAKLWCEFTCSPNQQDFVSISEMKPIEKKEGFTPEYQPAEAYVNTVEYRLSTDFAEGMFSSCKDVTFGGQPALRVMCTSTPCTLTNWLEFIGTQNLDLNIPIHTKFLLYDPIKTPPSDRSTYMNVNFTGCDKSARVGWPACSTSECNKEEYANLIDLDDGKTSGQTCNVHGIACLNIFVMLAFIGSLAVLLCVGFVFTSYDEDYTNLRQTQSGEESPKRNRIKRTGAWIHNFMENNARDIGMMAGRNPKSHFFIGCAVLIFCLPGMIYHKESTNVVDMWSSPRSRARQEEMVFNANFGRPQRYQQIMLLSHRDFQSSGKLYGPVFHKDIFEELFDILNAIKNISTQDSDGRTITLDDVCYRPMGPGYDCLIMSPTNYFQGNKEHLDMKSNKEETVSEDDDAFDYFSSEATTDEWMNHMAACIDQPMSQKTKSGLSCMGTYGGPSAPNMVFGKNSTNHQAANSIMMTILVTQRTEPEIQKAELWEKEFLKFCKEYREKSPKVIFSFMAERSITDEIENDAKDEIVTVVIALAFLIGYVTFSLGRYFVCENQLWSILVHSRICLGMLSVIINLLSSFCSWGIFSMFGIHPVKNALVVQFFVVTLLGVCRTFMVVKYYAQQRVSMPYMSPDQCPEIVGMVMAGTMPAMFSSSLGCAFSFFIGGFTDLPAIRTFCLYAGLAVLIDVVLHCTIFLALFVWDTQRELNGKPEFFFPYQIKDLLGAYLIGRQRATDTFMTQFFHFQVAPFLMHRMTRIITGIIFIASFITTVILSSKISVGFDQSMAFTEKSYISTHFRYLDKFFDVGPPVFFTVDGELDWHRPDVQNKFCTFPGCSDTSFGNIMNYAVGHTEQTYLSGEMYNWIDNYLEWISRKSPCCKVYVHDPNTFCSTNRNKSALDDKACRTCMDFDYVANSYPKSSIMYHRPSIEVFYRHLRHFLEDTPNSECVFGGRASFKDAISFTSRGRIQASQFMTFHKKLSISNSSDFIKAMDTARMVSRRLERSIDDTAHVFAYSKIFPFYEQYSTIMPILTTQLFITVVGVFGIICVTLGIDVKGAACAVICQVSNYFHIVAFMYIFNIPVNALSATNLVMSSGILIEFSVNVLKGYACSLRQRAKDRAESTVGSIGPIILSGPVVTMAGSTMFLSGAHLQIITVYFFKLFLITIVSSAVHALIILPILLAFGGSRGHGSSETSTNDNDEQHDACVLSPTAESHISNVEEGILNRPSLLDASHILDPLLKAEGGIDKAIDIITIDRSYPSTPSSLPCTSRMPRAHIEPDLRSL</sequence>
<feature type="signal peptide" evidence="2">
    <location>
        <begin position="1"/>
        <end position="20"/>
    </location>
</feature>
<feature type="chain" id="PRO_0000023264" description="NPC intracellular cholesterol transporter 1 homolog 1">
    <location>
        <begin position="21"/>
        <end position="1383"/>
    </location>
</feature>
<feature type="transmembrane region" description="Helical" evidence="2">
    <location>
        <begin position="282"/>
        <end position="302"/>
    </location>
</feature>
<feature type="transmembrane region" description="Helical" evidence="2">
    <location>
        <begin position="353"/>
        <end position="373"/>
    </location>
</feature>
<feature type="transmembrane region" description="Helical" evidence="2">
    <location>
        <begin position="627"/>
        <end position="647"/>
    </location>
</feature>
<feature type="transmembrane region" description="Helical" evidence="2">
    <location>
        <begin position="665"/>
        <end position="685"/>
    </location>
</feature>
<feature type="transmembrane region" description="Helical" evidence="2">
    <location>
        <begin position="697"/>
        <end position="717"/>
    </location>
</feature>
<feature type="transmembrane region" description="Helical" evidence="2">
    <location>
        <begin position="746"/>
        <end position="766"/>
    </location>
</feature>
<feature type="transmembrane region" description="Helical" evidence="2">
    <location>
        <begin position="780"/>
        <end position="800"/>
    </location>
</feature>
<feature type="transmembrane region" description="Helical" evidence="2">
    <location>
        <begin position="856"/>
        <end position="876"/>
    </location>
</feature>
<feature type="transmembrane region" description="Helical" evidence="2">
    <location>
        <begin position="1126"/>
        <end position="1146"/>
    </location>
</feature>
<feature type="transmembrane region" description="Helical" evidence="2">
    <location>
        <begin position="1157"/>
        <end position="1177"/>
    </location>
</feature>
<feature type="transmembrane region" description="Helical" evidence="2">
    <location>
        <begin position="1179"/>
        <end position="1199"/>
    </location>
</feature>
<feature type="transmembrane region" description="Helical" evidence="2">
    <location>
        <begin position="1226"/>
        <end position="1246"/>
    </location>
</feature>
<feature type="transmembrane region" description="Helical" evidence="2">
    <location>
        <begin position="1260"/>
        <end position="1280"/>
    </location>
</feature>
<feature type="domain" description="SSD" evidence="3 6">
    <location>
        <begin position="627"/>
        <end position="800"/>
    </location>
</feature>
<feature type="glycosylation site" description="N-linked (GlcNAc...) asparagine" evidence="2">
    <location>
        <position position="42"/>
    </location>
</feature>
<feature type="glycosylation site" description="N-linked (GlcNAc...) asparagine" evidence="5">
    <location>
        <position position="231"/>
    </location>
</feature>
<feature type="glycosylation site" description="N-linked (GlcNAc...) asparagine" evidence="2">
    <location>
        <position position="447"/>
    </location>
</feature>
<feature type="glycosylation site" description="N-linked (GlcNAc...) asparagine" evidence="2">
    <location>
        <position position="558"/>
    </location>
</feature>
<feature type="glycosylation site" description="N-linked (GlcNAc...) asparagine" evidence="2">
    <location>
        <position position="993"/>
    </location>
</feature>
<feature type="glycosylation site" description="N-linked (GlcNAc...) asparagine" evidence="2">
    <location>
        <position position="1082"/>
    </location>
</feature>
<feature type="disulfide bond" evidence="1">
    <location>
        <begin position="22"/>
        <end position="76"/>
    </location>
</feature>
<feature type="disulfide bond" evidence="1">
    <location>
        <begin position="28"/>
        <end position="39"/>
    </location>
</feature>
<feature type="disulfide bond" evidence="1">
    <location>
        <begin position="65"/>
        <end position="111"/>
    </location>
</feature>
<feature type="disulfide bond" evidence="1">
    <location>
        <begin position="77"/>
        <end position="115"/>
    </location>
</feature>
<feature type="disulfide bond" evidence="1">
    <location>
        <begin position="99"/>
        <end position="246"/>
    </location>
</feature>
<feature type="disulfide bond" evidence="1">
    <location>
        <begin position="102"/>
        <end position="167"/>
    </location>
</feature>
<feature type="disulfide bond" evidence="1">
    <location>
        <begin position="182"/>
        <end position="187"/>
    </location>
</feature>
<feature type="disulfide bond" evidence="1">
    <location>
        <begin position="235"/>
        <end position="251"/>
    </location>
</feature>
<feature type="disulfide bond" evidence="1">
    <location>
        <begin position="464"/>
        <end position="474"/>
    </location>
</feature>
<feature type="disulfide bond" evidence="1">
    <location>
        <begin position="526"/>
        <end position="541"/>
    </location>
</feature>
<feature type="disulfide bond" evidence="1">
    <location>
        <begin position="929"/>
        <end position="934"/>
    </location>
</feature>
<feature type="disulfide bond" evidence="1">
    <location>
        <begin position="976"/>
        <end position="1046"/>
    </location>
</feature>
<feature type="disulfide bond" evidence="1">
    <location>
        <begin position="977"/>
        <end position="1005"/>
    </location>
</feature>
<feature type="disulfide bond" evidence="1">
    <location>
        <begin position="988"/>
        <end position="1002"/>
    </location>
</feature>
<comment type="function">
    <text evidence="1 4">Involved in the uptake or utilization of cholesterol (By similarity). Ncr-1 and ncr-2 act redundantly to prevent dauer larva formation under favorable growth conditions, and are required for the normal functioning of ADF, ASI and ASG neurons (PubMed:10801441).</text>
</comment>
<comment type="catalytic activity">
    <reaction evidence="1">
        <text>cholesterol(in) = cholesterol(out)</text>
        <dbReference type="Rhea" id="RHEA:39747"/>
        <dbReference type="ChEBI" id="CHEBI:16113"/>
    </reaction>
</comment>
<comment type="subcellular location">
    <subcellularLocation>
        <location>Membrane</location>
        <topology>Multi-pass membrane protein</topology>
    </subcellularLocation>
</comment>
<comment type="disruption phenotype">
    <text evidence="4">Both ncr-1 single mutant and ncr-1 and ncr-2 double mutants exhibit slow embryonic and larval development, and hyperactive egg-laying behavior (egg-laying constitutive (egl-c) phenotype). Ncr-1 and ncr-2 double mutants inappropriately and transiently form dauer larvae under favorable conditions (dauer-constitutive (daf-c) phenotype).</text>
</comment>
<comment type="similarity">
    <text evidence="6">Belongs to the patched family.</text>
</comment>